<comment type="function">
    <text evidence="1">Catalyzes the ATP-dependent phosphorylation of N-acetyl-L-glutamate.</text>
</comment>
<comment type="catalytic activity">
    <reaction evidence="1">
        <text>N-acetyl-L-glutamate + ATP = N-acetyl-L-glutamyl 5-phosphate + ADP</text>
        <dbReference type="Rhea" id="RHEA:14629"/>
        <dbReference type="ChEBI" id="CHEBI:30616"/>
        <dbReference type="ChEBI" id="CHEBI:44337"/>
        <dbReference type="ChEBI" id="CHEBI:57936"/>
        <dbReference type="ChEBI" id="CHEBI:456216"/>
        <dbReference type="EC" id="2.7.2.8"/>
    </reaction>
</comment>
<comment type="pathway">
    <text evidence="1">Amino-acid biosynthesis; L-arginine biosynthesis; N(2)-acetyl-L-ornithine from L-glutamate: step 2/4.</text>
</comment>
<comment type="subcellular location">
    <subcellularLocation>
        <location evidence="1">Cytoplasm</location>
    </subcellularLocation>
</comment>
<comment type="similarity">
    <text evidence="1">Belongs to the acetylglutamate kinase family. ArgB subfamily.</text>
</comment>
<reference key="1">
    <citation type="journal article" date="2006" name="Nat. Biotechnol.">
        <title>Complete genome of the mutualistic, N2-fixing grass endophyte Azoarcus sp. strain BH72.</title>
        <authorList>
            <person name="Krause A."/>
            <person name="Ramakumar A."/>
            <person name="Bartels D."/>
            <person name="Battistoni F."/>
            <person name="Bekel T."/>
            <person name="Boch J."/>
            <person name="Boehm M."/>
            <person name="Friedrich F."/>
            <person name="Hurek T."/>
            <person name="Krause L."/>
            <person name="Linke B."/>
            <person name="McHardy A.C."/>
            <person name="Sarkar A."/>
            <person name="Schneiker S."/>
            <person name="Syed A.A."/>
            <person name="Thauer R."/>
            <person name="Vorhoelter F.-J."/>
            <person name="Weidner S."/>
            <person name="Puehler A."/>
            <person name="Reinhold-Hurek B."/>
            <person name="Kaiser O."/>
            <person name="Goesmann A."/>
        </authorList>
    </citation>
    <scope>NUCLEOTIDE SEQUENCE [LARGE SCALE GENOMIC DNA]</scope>
    <source>
        <strain>BH72</strain>
    </source>
</reference>
<sequence>MSAASSTESVTPALKAEILAEALPYIKRFFDKTIVIKYGGNAMTDPHLKDCFARDVVLLKLVGLNPVVVHGGGPQIETLLAKVGKKGEFVQGMRVTDAETMEVVEMVLGGQVNKEIVNLINQAGGKAVGLTGKDASFIRAKKLLMQKLDAPAGDVIDVGQVGEITTIDPSLISFLDQGDFIPVIAPIGVGDNGETYNINADVVAGKLAEILKAEKLVLLTNTPGVLDKAGNLLTGLTPRQIDDLVADGTLSGGMLPKIGSALDAARNGVKSVHIIDGRVEHCLLLEILTDHGVGTMIKSK</sequence>
<feature type="chain" id="PRO_1000010482" description="Acetylglutamate kinase">
    <location>
        <begin position="1"/>
        <end position="300"/>
    </location>
</feature>
<feature type="binding site" evidence="1">
    <location>
        <begin position="72"/>
        <end position="73"/>
    </location>
    <ligand>
        <name>substrate</name>
    </ligand>
</feature>
<feature type="binding site" evidence="1">
    <location>
        <position position="94"/>
    </location>
    <ligand>
        <name>substrate</name>
    </ligand>
</feature>
<feature type="binding site" evidence="1">
    <location>
        <position position="197"/>
    </location>
    <ligand>
        <name>substrate</name>
    </ligand>
</feature>
<feature type="site" description="Transition state stabilizer" evidence="1">
    <location>
        <position position="37"/>
    </location>
</feature>
<feature type="site" description="Transition state stabilizer" evidence="1">
    <location>
        <position position="257"/>
    </location>
</feature>
<organism>
    <name type="scientific">Azoarcus sp. (strain BH72)</name>
    <dbReference type="NCBI Taxonomy" id="418699"/>
    <lineage>
        <taxon>Bacteria</taxon>
        <taxon>Pseudomonadati</taxon>
        <taxon>Pseudomonadota</taxon>
        <taxon>Betaproteobacteria</taxon>
        <taxon>Rhodocyclales</taxon>
        <taxon>Zoogloeaceae</taxon>
        <taxon>Azoarcus</taxon>
    </lineage>
</organism>
<gene>
    <name evidence="1" type="primary">argB</name>
    <name type="ordered locus">azo3244</name>
</gene>
<dbReference type="EC" id="2.7.2.8" evidence="1"/>
<dbReference type="EMBL" id="AM406670">
    <property type="protein sequence ID" value="CAL95860.1"/>
    <property type="molecule type" value="Genomic_DNA"/>
</dbReference>
<dbReference type="RefSeq" id="WP_011766967.1">
    <property type="nucleotide sequence ID" value="NC_008702.1"/>
</dbReference>
<dbReference type="SMR" id="A1KAK4"/>
<dbReference type="STRING" id="62928.azo3244"/>
<dbReference type="KEGG" id="aoa:dqs_3381"/>
<dbReference type="KEGG" id="azo:azo3244"/>
<dbReference type="eggNOG" id="COG0548">
    <property type="taxonomic scope" value="Bacteria"/>
</dbReference>
<dbReference type="HOGENOM" id="CLU_053680_0_0_4"/>
<dbReference type="OrthoDB" id="9803155at2"/>
<dbReference type="UniPathway" id="UPA00068">
    <property type="reaction ID" value="UER00107"/>
</dbReference>
<dbReference type="Proteomes" id="UP000002588">
    <property type="component" value="Chromosome"/>
</dbReference>
<dbReference type="GO" id="GO:0005737">
    <property type="term" value="C:cytoplasm"/>
    <property type="evidence" value="ECO:0007669"/>
    <property type="project" value="UniProtKB-SubCell"/>
</dbReference>
<dbReference type="GO" id="GO:0003991">
    <property type="term" value="F:acetylglutamate kinase activity"/>
    <property type="evidence" value="ECO:0007669"/>
    <property type="project" value="UniProtKB-UniRule"/>
</dbReference>
<dbReference type="GO" id="GO:0005524">
    <property type="term" value="F:ATP binding"/>
    <property type="evidence" value="ECO:0007669"/>
    <property type="project" value="UniProtKB-UniRule"/>
</dbReference>
<dbReference type="GO" id="GO:0042450">
    <property type="term" value="P:arginine biosynthetic process via ornithine"/>
    <property type="evidence" value="ECO:0007669"/>
    <property type="project" value="UniProtKB-UniRule"/>
</dbReference>
<dbReference type="GO" id="GO:0006526">
    <property type="term" value="P:L-arginine biosynthetic process"/>
    <property type="evidence" value="ECO:0007669"/>
    <property type="project" value="UniProtKB-UniPathway"/>
</dbReference>
<dbReference type="CDD" id="cd04250">
    <property type="entry name" value="AAK_NAGK-C"/>
    <property type="match status" value="1"/>
</dbReference>
<dbReference type="FunFam" id="3.40.1160.10:FF:000004">
    <property type="entry name" value="Acetylglutamate kinase"/>
    <property type="match status" value="1"/>
</dbReference>
<dbReference type="Gene3D" id="3.40.1160.10">
    <property type="entry name" value="Acetylglutamate kinase-like"/>
    <property type="match status" value="1"/>
</dbReference>
<dbReference type="HAMAP" id="MF_00082">
    <property type="entry name" value="ArgB"/>
    <property type="match status" value="1"/>
</dbReference>
<dbReference type="InterPro" id="IPR036393">
    <property type="entry name" value="AceGlu_kinase-like_sf"/>
</dbReference>
<dbReference type="InterPro" id="IPR004662">
    <property type="entry name" value="AcgluKinase_fam"/>
</dbReference>
<dbReference type="InterPro" id="IPR037528">
    <property type="entry name" value="ArgB"/>
</dbReference>
<dbReference type="InterPro" id="IPR001048">
    <property type="entry name" value="Asp/Glu/Uridylate_kinase"/>
</dbReference>
<dbReference type="InterPro" id="IPR001057">
    <property type="entry name" value="Glu/AcGlu_kinase"/>
</dbReference>
<dbReference type="InterPro" id="IPR041727">
    <property type="entry name" value="NAGK-C"/>
</dbReference>
<dbReference type="NCBIfam" id="TIGR00761">
    <property type="entry name" value="argB"/>
    <property type="match status" value="1"/>
</dbReference>
<dbReference type="PANTHER" id="PTHR23342">
    <property type="entry name" value="N-ACETYLGLUTAMATE SYNTHASE"/>
    <property type="match status" value="1"/>
</dbReference>
<dbReference type="PANTHER" id="PTHR23342:SF0">
    <property type="entry name" value="N-ACETYLGLUTAMATE SYNTHASE, MITOCHONDRIAL"/>
    <property type="match status" value="1"/>
</dbReference>
<dbReference type="Pfam" id="PF00696">
    <property type="entry name" value="AA_kinase"/>
    <property type="match status" value="1"/>
</dbReference>
<dbReference type="PIRSF" id="PIRSF000728">
    <property type="entry name" value="NAGK"/>
    <property type="match status" value="1"/>
</dbReference>
<dbReference type="PRINTS" id="PR00474">
    <property type="entry name" value="GLU5KINASE"/>
</dbReference>
<dbReference type="SUPFAM" id="SSF53633">
    <property type="entry name" value="Carbamate kinase-like"/>
    <property type="match status" value="1"/>
</dbReference>
<accession>A1KAK4</accession>
<proteinExistence type="inferred from homology"/>
<name>ARGB_AZOSB</name>
<evidence type="ECO:0000255" key="1">
    <source>
        <dbReference type="HAMAP-Rule" id="MF_00082"/>
    </source>
</evidence>
<keyword id="KW-0028">Amino-acid biosynthesis</keyword>
<keyword id="KW-0055">Arginine biosynthesis</keyword>
<keyword id="KW-0067">ATP-binding</keyword>
<keyword id="KW-0963">Cytoplasm</keyword>
<keyword id="KW-0418">Kinase</keyword>
<keyword id="KW-0547">Nucleotide-binding</keyword>
<keyword id="KW-1185">Reference proteome</keyword>
<keyword id="KW-0808">Transferase</keyword>
<protein>
    <recommendedName>
        <fullName evidence="1">Acetylglutamate kinase</fullName>
        <ecNumber evidence="1">2.7.2.8</ecNumber>
    </recommendedName>
    <alternativeName>
        <fullName evidence="1">N-acetyl-L-glutamate 5-phosphotransferase</fullName>
    </alternativeName>
    <alternativeName>
        <fullName evidence="1">NAG kinase</fullName>
        <shortName evidence="1">NAGK</shortName>
    </alternativeName>
</protein>